<name>MGSA_HAEIG</name>
<protein>
    <recommendedName>
        <fullName evidence="1">Methylglyoxal synthase</fullName>
        <shortName evidence="1">MGS</shortName>
        <ecNumber evidence="1">4.2.3.3</ecNumber>
    </recommendedName>
</protein>
<dbReference type="EC" id="4.2.3.3" evidence="1"/>
<dbReference type="EMBL" id="CP000672">
    <property type="protein sequence ID" value="ABQ99425.1"/>
    <property type="molecule type" value="Genomic_DNA"/>
</dbReference>
<dbReference type="SMR" id="A5UF70"/>
<dbReference type="KEGG" id="hiq:CGSHiGG_01835"/>
<dbReference type="HOGENOM" id="CLU_120420_0_1_6"/>
<dbReference type="Proteomes" id="UP000001990">
    <property type="component" value="Chromosome"/>
</dbReference>
<dbReference type="GO" id="GO:0005829">
    <property type="term" value="C:cytosol"/>
    <property type="evidence" value="ECO:0007669"/>
    <property type="project" value="TreeGrafter"/>
</dbReference>
<dbReference type="GO" id="GO:0008929">
    <property type="term" value="F:methylglyoxal synthase activity"/>
    <property type="evidence" value="ECO:0007669"/>
    <property type="project" value="UniProtKB-UniRule"/>
</dbReference>
<dbReference type="GO" id="GO:0019242">
    <property type="term" value="P:methylglyoxal biosynthetic process"/>
    <property type="evidence" value="ECO:0007669"/>
    <property type="project" value="UniProtKB-UniRule"/>
</dbReference>
<dbReference type="CDD" id="cd01422">
    <property type="entry name" value="MGS"/>
    <property type="match status" value="1"/>
</dbReference>
<dbReference type="FunFam" id="3.40.50.1380:FF:000002">
    <property type="entry name" value="Methylglyoxal synthase"/>
    <property type="match status" value="1"/>
</dbReference>
<dbReference type="Gene3D" id="3.40.50.1380">
    <property type="entry name" value="Methylglyoxal synthase-like domain"/>
    <property type="match status" value="1"/>
</dbReference>
<dbReference type="HAMAP" id="MF_00549">
    <property type="entry name" value="Methylglyoxal_synth"/>
    <property type="match status" value="1"/>
</dbReference>
<dbReference type="InterPro" id="IPR004363">
    <property type="entry name" value="Methylgl_synth"/>
</dbReference>
<dbReference type="InterPro" id="IPR018148">
    <property type="entry name" value="Methylglyoxal_synth_AS"/>
</dbReference>
<dbReference type="InterPro" id="IPR011607">
    <property type="entry name" value="MGS-like_dom"/>
</dbReference>
<dbReference type="InterPro" id="IPR036914">
    <property type="entry name" value="MGS-like_dom_sf"/>
</dbReference>
<dbReference type="NCBIfam" id="TIGR00160">
    <property type="entry name" value="MGSA"/>
    <property type="match status" value="1"/>
</dbReference>
<dbReference type="NCBIfam" id="NF003559">
    <property type="entry name" value="PRK05234.1"/>
    <property type="match status" value="1"/>
</dbReference>
<dbReference type="PANTHER" id="PTHR30492">
    <property type="entry name" value="METHYLGLYOXAL SYNTHASE"/>
    <property type="match status" value="1"/>
</dbReference>
<dbReference type="PANTHER" id="PTHR30492:SF0">
    <property type="entry name" value="METHYLGLYOXAL SYNTHASE"/>
    <property type="match status" value="1"/>
</dbReference>
<dbReference type="Pfam" id="PF02142">
    <property type="entry name" value="MGS"/>
    <property type="match status" value="1"/>
</dbReference>
<dbReference type="PIRSF" id="PIRSF006614">
    <property type="entry name" value="Methylglyox_syn"/>
    <property type="match status" value="1"/>
</dbReference>
<dbReference type="SMART" id="SM00851">
    <property type="entry name" value="MGS"/>
    <property type="match status" value="1"/>
</dbReference>
<dbReference type="SUPFAM" id="SSF52335">
    <property type="entry name" value="Methylglyoxal synthase-like"/>
    <property type="match status" value="1"/>
</dbReference>
<dbReference type="PROSITE" id="PS01335">
    <property type="entry name" value="METHYLGLYOXAL_SYNTH"/>
    <property type="match status" value="1"/>
</dbReference>
<dbReference type="PROSITE" id="PS51855">
    <property type="entry name" value="MGS"/>
    <property type="match status" value="1"/>
</dbReference>
<reference key="1">
    <citation type="journal article" date="2007" name="Genome Biol.">
        <title>Characterization and modeling of the Haemophilus influenzae core and supragenomes based on the complete genomic sequences of Rd and 12 clinical nontypeable strains.</title>
        <authorList>
            <person name="Hogg J.S."/>
            <person name="Hu F.Z."/>
            <person name="Janto B."/>
            <person name="Boissy R."/>
            <person name="Hayes J."/>
            <person name="Keefe R."/>
            <person name="Post J.C."/>
            <person name="Ehrlich G.D."/>
        </authorList>
    </citation>
    <scope>NUCLEOTIDE SEQUENCE [LARGE SCALE GENOMIC DNA]</scope>
    <source>
        <strain>PittGG</strain>
    </source>
</reference>
<evidence type="ECO:0000255" key="1">
    <source>
        <dbReference type="HAMAP-Rule" id="MF_00549"/>
    </source>
</evidence>
<comment type="function">
    <text evidence="1">Catalyzes the formation of methylglyoxal from dihydroxyacetone phosphate.</text>
</comment>
<comment type="catalytic activity">
    <reaction evidence="1">
        <text>dihydroxyacetone phosphate = methylglyoxal + phosphate</text>
        <dbReference type="Rhea" id="RHEA:17937"/>
        <dbReference type="ChEBI" id="CHEBI:17158"/>
        <dbReference type="ChEBI" id="CHEBI:43474"/>
        <dbReference type="ChEBI" id="CHEBI:57642"/>
        <dbReference type="EC" id="4.2.3.3"/>
    </reaction>
</comment>
<comment type="similarity">
    <text evidence="1">Belongs to the methylglyoxal synthase family.</text>
</comment>
<accession>A5UF70</accession>
<sequence>MHTTTRTLTQHKRIALVAHDSCKKNLLNWTQKHKEALKPHILYATGTTGHILERETGLSIQSLLSGPMGGDQQLGGLIAEKKIDMMIFFWDPMNAAPHDPDVKALMRIATVWNIPVAINQSSADFLLTSVLFEQDVEIDVPDYEGYLKERLA</sequence>
<proteinExistence type="inferred from homology"/>
<keyword id="KW-0456">Lyase</keyword>
<gene>
    <name evidence="1" type="primary">mgsA</name>
    <name type="ordered locus">CGSHiGG_01835</name>
</gene>
<feature type="chain" id="PRO_1000017812" description="Methylglyoxal synthase">
    <location>
        <begin position="1"/>
        <end position="152"/>
    </location>
</feature>
<feature type="domain" description="MGS-like" evidence="1">
    <location>
        <begin position="6"/>
        <end position="152"/>
    </location>
</feature>
<feature type="active site" description="Proton donor/acceptor" evidence="1">
    <location>
        <position position="71"/>
    </location>
</feature>
<feature type="binding site" evidence="1">
    <location>
        <position position="19"/>
    </location>
    <ligand>
        <name>substrate</name>
    </ligand>
</feature>
<feature type="binding site" evidence="1">
    <location>
        <position position="23"/>
    </location>
    <ligand>
        <name>substrate</name>
    </ligand>
</feature>
<feature type="binding site" evidence="1">
    <location>
        <begin position="45"/>
        <end position="48"/>
    </location>
    <ligand>
        <name>substrate</name>
    </ligand>
</feature>
<feature type="binding site" evidence="1">
    <location>
        <begin position="65"/>
        <end position="66"/>
    </location>
    <ligand>
        <name>substrate</name>
    </ligand>
</feature>
<feature type="binding site" evidence="1">
    <location>
        <position position="98"/>
    </location>
    <ligand>
        <name>substrate</name>
    </ligand>
</feature>
<organism>
    <name type="scientific">Haemophilus influenzae (strain PittGG)</name>
    <dbReference type="NCBI Taxonomy" id="374931"/>
    <lineage>
        <taxon>Bacteria</taxon>
        <taxon>Pseudomonadati</taxon>
        <taxon>Pseudomonadota</taxon>
        <taxon>Gammaproteobacteria</taxon>
        <taxon>Pasteurellales</taxon>
        <taxon>Pasteurellaceae</taxon>
        <taxon>Haemophilus</taxon>
    </lineage>
</organism>